<sequence>MTQISGSPDVPDLGRRQFMNLLTFGTITGVAAGALYPAVKYLIPPSSGGSGGGVTAKDALGNDVKVTEFLASHNAGDRVLAQGLKGDPTYIVVQGDDTIANYGINAVCTHLGCVVPWNASENKFMCPCHGSQYNAEGKVVRGPAPLSLALAHATVTDDDKLVLSTWTETDFRTDEDPWWA</sequence>
<accession>P26290</accession>
<proteinExistence type="evidence at protein level"/>
<keyword id="KW-0001">2Fe-2S</keyword>
<keyword id="KW-0002">3D-structure</keyword>
<keyword id="KW-0903">Direct protein sequencing</keyword>
<keyword id="KW-1015">Disulfide bond</keyword>
<keyword id="KW-0249">Electron transport</keyword>
<keyword id="KW-0408">Iron</keyword>
<keyword id="KW-0411">Iron-sulfur</keyword>
<keyword id="KW-0472">Membrane</keyword>
<keyword id="KW-0479">Metal-binding</keyword>
<keyword id="KW-1185">Reference proteome</keyword>
<keyword id="KW-0793">Thylakoid</keyword>
<keyword id="KW-1278">Translocase</keyword>
<keyword id="KW-0812">Transmembrane</keyword>
<keyword id="KW-1133">Transmembrane helix</keyword>
<keyword id="KW-0813">Transport</keyword>
<name>UCRIB_SYNY3</name>
<organism>
    <name type="scientific">Synechocystis sp. (strain ATCC 27184 / PCC 6803 / Kazusa)</name>
    <dbReference type="NCBI Taxonomy" id="1111708"/>
    <lineage>
        <taxon>Bacteria</taxon>
        <taxon>Bacillati</taxon>
        <taxon>Cyanobacteriota</taxon>
        <taxon>Cyanophyceae</taxon>
        <taxon>Synechococcales</taxon>
        <taxon>Merismopediaceae</taxon>
        <taxon>Synechocystis</taxon>
    </lineage>
</organism>
<dbReference type="EC" id="7.1.1.6" evidence="1"/>
<dbReference type="EMBL" id="X58532">
    <property type="protein sequence ID" value="CAA41422.1"/>
    <property type="molecule type" value="Genomic_DNA"/>
</dbReference>
<dbReference type="EMBL" id="X58532">
    <property type="protein sequence ID" value="CAA41421.1"/>
    <property type="status" value="ALT_INIT"/>
    <property type="molecule type" value="Genomic_DNA"/>
</dbReference>
<dbReference type="EMBL" id="BA000022">
    <property type="protein sequence ID" value="BAA17628.1"/>
    <property type="status" value="ALT_INIT"/>
    <property type="molecule type" value="Genomic_DNA"/>
</dbReference>
<dbReference type="PIR" id="S16572">
    <property type="entry name" value="S16572"/>
</dbReference>
<dbReference type="PDB" id="7R0W">
    <property type="method" value="EM"/>
    <property type="resolution" value="2.80 A"/>
    <property type="chains" value="D/L=1-180"/>
</dbReference>
<dbReference type="PDB" id="7ZXY">
    <property type="method" value="EM"/>
    <property type="resolution" value="3.15 A"/>
    <property type="chains" value="D/L=1-180"/>
</dbReference>
<dbReference type="PDBsum" id="7R0W"/>
<dbReference type="PDBsum" id="7ZXY"/>
<dbReference type="EMDB" id="EMD-15017"/>
<dbReference type="SMR" id="P26290"/>
<dbReference type="FunCoup" id="P26290">
    <property type="interactions" value="250"/>
</dbReference>
<dbReference type="STRING" id="1148.gene:10498495"/>
<dbReference type="TCDB" id="3.D.3.5.1">
    <property type="family name" value="the proton-translocating quinol:cytochrome c reductase (qcr) superfamily"/>
</dbReference>
<dbReference type="PaxDb" id="1148-1652708"/>
<dbReference type="EnsemblBacteria" id="BAA17628">
    <property type="protein sequence ID" value="BAA17628"/>
    <property type="gene ID" value="BAA17628"/>
</dbReference>
<dbReference type="KEGG" id="syn:sll1316"/>
<dbReference type="eggNOG" id="COG0723">
    <property type="taxonomic scope" value="Bacteria"/>
</dbReference>
<dbReference type="InParanoid" id="P26290"/>
<dbReference type="PhylomeDB" id="P26290"/>
<dbReference type="Proteomes" id="UP000001425">
    <property type="component" value="Chromosome"/>
</dbReference>
<dbReference type="GO" id="GO:0005886">
    <property type="term" value="C:plasma membrane"/>
    <property type="evidence" value="ECO:0000318"/>
    <property type="project" value="GO_Central"/>
</dbReference>
<dbReference type="GO" id="GO:0031676">
    <property type="term" value="C:plasma membrane-derived thylakoid membrane"/>
    <property type="evidence" value="ECO:0007669"/>
    <property type="project" value="UniProtKB-SubCell"/>
</dbReference>
<dbReference type="GO" id="GO:0051537">
    <property type="term" value="F:2 iron, 2 sulfur cluster binding"/>
    <property type="evidence" value="ECO:0007669"/>
    <property type="project" value="UniProtKB-KW"/>
</dbReference>
<dbReference type="GO" id="GO:0045158">
    <property type="term" value="F:electron transporter, transferring electrons within cytochrome b6/f complex of photosystem II activity"/>
    <property type="evidence" value="ECO:0007669"/>
    <property type="project" value="UniProtKB-UniRule"/>
</dbReference>
<dbReference type="GO" id="GO:0046872">
    <property type="term" value="F:metal ion binding"/>
    <property type="evidence" value="ECO:0007669"/>
    <property type="project" value="UniProtKB-KW"/>
</dbReference>
<dbReference type="GO" id="GO:0004497">
    <property type="term" value="F:monooxygenase activity"/>
    <property type="evidence" value="ECO:0007669"/>
    <property type="project" value="UniProtKB-ARBA"/>
</dbReference>
<dbReference type="GO" id="GO:0016491">
    <property type="term" value="F:oxidoreductase activity"/>
    <property type="evidence" value="ECO:0000318"/>
    <property type="project" value="GO_Central"/>
</dbReference>
<dbReference type="GO" id="GO:0016705">
    <property type="term" value="F:oxidoreductase activity, acting on paired donors, with incorporation or reduction of molecular oxygen"/>
    <property type="evidence" value="ECO:0007669"/>
    <property type="project" value="UniProtKB-ARBA"/>
</dbReference>
<dbReference type="GO" id="GO:0009496">
    <property type="term" value="F:plastoquinol--plastocyanin reductase activity"/>
    <property type="evidence" value="ECO:0007669"/>
    <property type="project" value="UniProtKB-UniRule"/>
</dbReference>
<dbReference type="GO" id="GO:0015979">
    <property type="term" value="P:photosynthesis"/>
    <property type="evidence" value="ECO:0007669"/>
    <property type="project" value="UniProtKB-UniRule"/>
</dbReference>
<dbReference type="CDD" id="cd03471">
    <property type="entry name" value="Rieske_cytochrome_b6f"/>
    <property type="match status" value="1"/>
</dbReference>
<dbReference type="FunFam" id="2.102.10.10:FF:000007">
    <property type="entry name" value="Cytochrome b6-f complex iron-sulfur subunit"/>
    <property type="match status" value="1"/>
</dbReference>
<dbReference type="Gene3D" id="2.102.10.10">
    <property type="entry name" value="Rieske [2Fe-2S] iron-sulphur domain"/>
    <property type="match status" value="1"/>
</dbReference>
<dbReference type="Gene3D" id="1.20.5.700">
    <property type="entry name" value="Single helix bin"/>
    <property type="match status" value="1"/>
</dbReference>
<dbReference type="HAMAP" id="MF_01335">
    <property type="entry name" value="Cytb6_f_Rieske"/>
    <property type="match status" value="1"/>
</dbReference>
<dbReference type="InterPro" id="IPR000595">
    <property type="entry name" value="cNMP-bd_dom"/>
</dbReference>
<dbReference type="InterPro" id="IPR023960">
    <property type="entry name" value="Cyt_b6_f_Rieske"/>
</dbReference>
<dbReference type="InterPro" id="IPR017941">
    <property type="entry name" value="Rieske_2Fe-2S"/>
</dbReference>
<dbReference type="InterPro" id="IPR036922">
    <property type="entry name" value="Rieske_2Fe-2S_sf"/>
</dbReference>
<dbReference type="InterPro" id="IPR014349">
    <property type="entry name" value="Rieske_Fe-S_prot"/>
</dbReference>
<dbReference type="InterPro" id="IPR005805">
    <property type="entry name" value="Rieske_Fe-S_prot_C"/>
</dbReference>
<dbReference type="NCBIfam" id="NF045928">
    <property type="entry name" value="Cytb6fFeSPetC"/>
    <property type="match status" value="1"/>
</dbReference>
<dbReference type="NCBIfam" id="NF010001">
    <property type="entry name" value="PRK13474.1"/>
    <property type="match status" value="1"/>
</dbReference>
<dbReference type="PANTHER" id="PTHR10134">
    <property type="entry name" value="CYTOCHROME B-C1 COMPLEX SUBUNIT RIESKE, MITOCHONDRIAL"/>
    <property type="match status" value="1"/>
</dbReference>
<dbReference type="Pfam" id="PF00355">
    <property type="entry name" value="Rieske"/>
    <property type="match status" value="1"/>
</dbReference>
<dbReference type="Pfam" id="PF25471">
    <property type="entry name" value="TM_PetC"/>
    <property type="match status" value="1"/>
</dbReference>
<dbReference type="PRINTS" id="PR00162">
    <property type="entry name" value="RIESKE"/>
</dbReference>
<dbReference type="SUPFAM" id="SSF50022">
    <property type="entry name" value="ISP domain"/>
    <property type="match status" value="1"/>
</dbReference>
<dbReference type="PROSITE" id="PS51296">
    <property type="entry name" value="RIESKE"/>
    <property type="match status" value="1"/>
</dbReference>
<feature type="initiator methionine" description="Removed" evidence="2">
    <location>
        <position position="1"/>
    </location>
</feature>
<feature type="chain" id="PRO_0000127785" description="Cytochrome b6-f complex iron-sulfur subunit 2">
    <location>
        <begin position="2"/>
        <end position="180"/>
    </location>
</feature>
<feature type="transmembrane region" description="Helical" evidence="1">
    <location>
        <begin position="21"/>
        <end position="43"/>
    </location>
</feature>
<feature type="domain" description="Rieske" evidence="1">
    <location>
        <begin position="66"/>
        <end position="162"/>
    </location>
</feature>
<feature type="binding site" evidence="1">
    <location>
        <position position="108"/>
    </location>
    <ligand>
        <name>[2Fe-2S] cluster</name>
        <dbReference type="ChEBI" id="CHEBI:190135"/>
    </ligand>
</feature>
<feature type="binding site" evidence="1">
    <location>
        <position position="110"/>
    </location>
    <ligand>
        <name>[2Fe-2S] cluster</name>
        <dbReference type="ChEBI" id="CHEBI:190135"/>
    </ligand>
</feature>
<feature type="binding site" evidence="1">
    <location>
        <position position="126"/>
    </location>
    <ligand>
        <name>[2Fe-2S] cluster</name>
        <dbReference type="ChEBI" id="CHEBI:190135"/>
    </ligand>
</feature>
<feature type="binding site" evidence="1">
    <location>
        <position position="129"/>
    </location>
    <ligand>
        <name>[2Fe-2S] cluster</name>
        <dbReference type="ChEBI" id="CHEBI:190135"/>
    </ligand>
</feature>
<feature type="disulfide bond" evidence="1">
    <location>
        <begin position="113"/>
        <end position="128"/>
    </location>
</feature>
<feature type="helix" evidence="4">
    <location>
        <begin position="13"/>
        <end position="42"/>
    </location>
</feature>
<feature type="strand" evidence="4">
    <location>
        <begin position="50"/>
        <end position="52"/>
    </location>
</feature>
<feature type="strand" evidence="4">
    <location>
        <begin position="59"/>
        <end position="62"/>
    </location>
</feature>
<feature type="helix" evidence="4">
    <location>
        <begin position="66"/>
        <end position="69"/>
    </location>
</feature>
<feature type="turn" evidence="4">
    <location>
        <begin position="70"/>
        <end position="72"/>
    </location>
</feature>
<feature type="strand" evidence="4">
    <location>
        <begin position="79"/>
        <end position="82"/>
    </location>
</feature>
<feature type="helix" evidence="4">
    <location>
        <begin position="84"/>
        <end position="86"/>
    </location>
</feature>
<feature type="strand" evidence="4">
    <location>
        <begin position="88"/>
        <end position="91"/>
    </location>
</feature>
<feature type="strand" evidence="4">
    <location>
        <begin position="94"/>
        <end position="98"/>
    </location>
</feature>
<feature type="strand" evidence="4">
    <location>
        <begin position="101"/>
        <end position="105"/>
    </location>
</feature>
<feature type="strand" evidence="4">
    <location>
        <begin position="109"/>
        <end position="111"/>
    </location>
</feature>
<feature type="turn" evidence="4">
    <location>
        <begin position="119"/>
        <end position="122"/>
    </location>
</feature>
<feature type="strand" evidence="4">
    <location>
        <begin position="123"/>
        <end position="125"/>
    </location>
</feature>
<feature type="turn" evidence="4">
    <location>
        <begin position="127"/>
        <end position="129"/>
    </location>
</feature>
<feature type="strand" evidence="5">
    <location>
        <begin position="135"/>
        <end position="137"/>
    </location>
</feature>
<feature type="strand" evidence="4">
    <location>
        <begin position="140"/>
        <end position="143"/>
    </location>
</feature>
<feature type="strand" evidence="4">
    <location>
        <begin position="150"/>
        <end position="152"/>
    </location>
</feature>
<feature type="strand" evidence="5">
    <location>
        <begin position="162"/>
        <end position="165"/>
    </location>
</feature>
<feature type="turn" evidence="4">
    <location>
        <begin position="171"/>
        <end position="173"/>
    </location>
</feature>
<reference key="1">
    <citation type="journal article" date="1991" name="Plant Mol. Biol.">
        <title>Primary structure of the psbN-psbH-petC-petA gene cluster of the cyanobacterium Synechocystis PCC 6803.</title>
        <authorList>
            <person name="Mayes S.R."/>
            <person name="Barber J."/>
        </authorList>
    </citation>
    <scope>NUCLEOTIDE SEQUENCE [GENOMIC DNA]</scope>
</reference>
<reference key="2">
    <citation type="journal article" date="1996" name="DNA Res.">
        <title>Sequence analysis of the genome of the unicellular cyanobacterium Synechocystis sp. strain PCC6803. II. Sequence determination of the entire genome and assignment of potential protein-coding regions.</title>
        <authorList>
            <person name="Kaneko T."/>
            <person name="Sato S."/>
            <person name="Kotani H."/>
            <person name="Tanaka A."/>
            <person name="Asamizu E."/>
            <person name="Nakamura Y."/>
            <person name="Miyajima N."/>
            <person name="Hirosawa M."/>
            <person name="Sugiura M."/>
            <person name="Sasamoto S."/>
            <person name="Kimura T."/>
            <person name="Hosouchi T."/>
            <person name="Matsuno A."/>
            <person name="Muraki A."/>
            <person name="Nakazaki N."/>
            <person name="Naruo K."/>
            <person name="Okumura S."/>
            <person name="Shimpo S."/>
            <person name="Takeuchi C."/>
            <person name="Wada T."/>
            <person name="Watanabe A."/>
            <person name="Yamada M."/>
            <person name="Yasuda M."/>
            <person name="Tabata S."/>
        </authorList>
    </citation>
    <scope>NUCLEOTIDE SEQUENCE [LARGE SCALE GENOMIC DNA]</scope>
    <source>
        <strain>ATCC 27184 / PCC 6803 / Kazusa</strain>
    </source>
</reference>
<reference key="3">
    <citation type="journal article" date="1997" name="Electrophoresis">
        <title>Towards a proteome project of cyanobacterium Synechocystis sp. strain PCC6803: linking 130 protein spots with their respective genes.</title>
        <authorList>
            <person name="Sazuka T."/>
            <person name="Ohara O."/>
        </authorList>
    </citation>
    <scope>PROTEIN SEQUENCE OF 2-17</scope>
</reference>
<gene>
    <name evidence="1" type="primary">petC2</name>
    <name type="ordered locus">sll1316</name>
</gene>
<protein>
    <recommendedName>
        <fullName evidence="1">Cytochrome b6-f complex iron-sulfur subunit 2</fullName>
        <ecNumber evidence="1">7.1.1.6</ecNumber>
    </recommendedName>
    <alternativeName>
        <fullName evidence="1">Plastohydroquinone:plastocyanin oxidoreductase iron-sulfur protein 2</fullName>
        <shortName evidence="1">ISP 2</shortName>
        <shortName evidence="1">RISP 2</shortName>
    </alternativeName>
    <alternativeName>
        <fullName evidence="1">Rieske iron-sulfur protein 2</fullName>
    </alternativeName>
</protein>
<comment type="function">
    <text evidence="1">Component of the cytochrome b6-f complex, which mediates electron transfer between photosystem II (PSII) and photosystem I (PSI), cyclic electron flow around PSI, and state transitions.</text>
</comment>
<comment type="catalytic activity">
    <reaction evidence="1">
        <text>2 oxidized [plastocyanin] + a plastoquinol + 2 H(+)(in) = 2 reduced [plastocyanin] + a plastoquinone + 4 H(+)(out)</text>
        <dbReference type="Rhea" id="RHEA:22148"/>
        <dbReference type="Rhea" id="RHEA-COMP:9561"/>
        <dbReference type="Rhea" id="RHEA-COMP:9562"/>
        <dbReference type="Rhea" id="RHEA-COMP:10039"/>
        <dbReference type="Rhea" id="RHEA-COMP:10040"/>
        <dbReference type="ChEBI" id="CHEBI:15378"/>
        <dbReference type="ChEBI" id="CHEBI:17757"/>
        <dbReference type="ChEBI" id="CHEBI:29036"/>
        <dbReference type="ChEBI" id="CHEBI:49552"/>
        <dbReference type="ChEBI" id="CHEBI:62192"/>
        <dbReference type="EC" id="7.1.1.6"/>
    </reaction>
</comment>
<comment type="cofactor">
    <cofactor evidence="1">
        <name>[2Fe-2S] cluster</name>
        <dbReference type="ChEBI" id="CHEBI:190135"/>
    </cofactor>
    <text evidence="1">Binds 1 [2Fe-2S] cluster per subunit.</text>
</comment>
<comment type="subunit">
    <text evidence="1">The 4 large subunits of the cytochrome b6-f complex are cytochrome b6, subunit IV (17 kDa polypeptide, PetD), cytochrome f and the Rieske protein, while the 4 small subunits are PetG, PetL, PetM and PetN. The complex functions as a dimer.</text>
</comment>
<comment type="subcellular location">
    <subcellularLocation>
        <location evidence="1">Cellular thylakoid membrane</location>
        <topology evidence="1">Single-pass membrane protein</topology>
    </subcellularLocation>
    <text evidence="1">The transmembrane helix obliquely spans the membrane in one monomer, and its extrinsic C-terminal domain is part of the other monomer.</text>
</comment>
<comment type="miscellaneous">
    <text>The Rieske iron-sulfur protein is a high potential 2Fe-2S protein.</text>
</comment>
<comment type="similarity">
    <text evidence="1">Belongs to the Rieske iron-sulfur protein family.</text>
</comment>
<comment type="sequence caution" evidence="3">
    <conflict type="erroneous initiation">
        <sequence resource="EMBL-CDS" id="BAA17628"/>
    </conflict>
</comment>
<comment type="sequence caution" evidence="3">
    <conflict type="erroneous initiation">
        <sequence resource="EMBL-CDS" id="CAA41421"/>
    </conflict>
</comment>
<evidence type="ECO:0000255" key="1">
    <source>
        <dbReference type="HAMAP-Rule" id="MF_01335"/>
    </source>
</evidence>
<evidence type="ECO:0000269" key="2">
    <source>
    </source>
</evidence>
<evidence type="ECO:0000305" key="3"/>
<evidence type="ECO:0007829" key="4">
    <source>
        <dbReference type="PDB" id="7R0W"/>
    </source>
</evidence>
<evidence type="ECO:0007829" key="5">
    <source>
        <dbReference type="PDB" id="7ZXY"/>
    </source>
</evidence>